<gene>
    <name evidence="1" type="primary">aat</name>
    <name type="ordered locus">DMR_23710</name>
</gene>
<feature type="chain" id="PRO_1000212567" description="Leucyl/phenylalanyl-tRNA--protein transferase">
    <location>
        <begin position="1"/>
        <end position="247"/>
    </location>
</feature>
<comment type="function">
    <text evidence="1">Functions in the N-end rule pathway of protein degradation where it conjugates Leu, Phe and, less efficiently, Met from aminoacyl-tRNAs to the N-termini of proteins containing an N-terminal arginine or lysine.</text>
</comment>
<comment type="catalytic activity">
    <reaction evidence="1">
        <text>N-terminal L-lysyl-[protein] + L-leucyl-tRNA(Leu) = N-terminal L-leucyl-L-lysyl-[protein] + tRNA(Leu) + H(+)</text>
        <dbReference type="Rhea" id="RHEA:12340"/>
        <dbReference type="Rhea" id="RHEA-COMP:9613"/>
        <dbReference type="Rhea" id="RHEA-COMP:9622"/>
        <dbReference type="Rhea" id="RHEA-COMP:12670"/>
        <dbReference type="Rhea" id="RHEA-COMP:12671"/>
        <dbReference type="ChEBI" id="CHEBI:15378"/>
        <dbReference type="ChEBI" id="CHEBI:65249"/>
        <dbReference type="ChEBI" id="CHEBI:78442"/>
        <dbReference type="ChEBI" id="CHEBI:78494"/>
        <dbReference type="ChEBI" id="CHEBI:133043"/>
        <dbReference type="EC" id="2.3.2.6"/>
    </reaction>
</comment>
<comment type="catalytic activity">
    <reaction evidence="1">
        <text>N-terminal L-arginyl-[protein] + L-leucyl-tRNA(Leu) = N-terminal L-leucyl-L-arginyl-[protein] + tRNA(Leu) + H(+)</text>
        <dbReference type="Rhea" id="RHEA:50416"/>
        <dbReference type="Rhea" id="RHEA-COMP:9613"/>
        <dbReference type="Rhea" id="RHEA-COMP:9622"/>
        <dbReference type="Rhea" id="RHEA-COMP:12672"/>
        <dbReference type="Rhea" id="RHEA-COMP:12673"/>
        <dbReference type="ChEBI" id="CHEBI:15378"/>
        <dbReference type="ChEBI" id="CHEBI:64719"/>
        <dbReference type="ChEBI" id="CHEBI:78442"/>
        <dbReference type="ChEBI" id="CHEBI:78494"/>
        <dbReference type="ChEBI" id="CHEBI:133044"/>
        <dbReference type="EC" id="2.3.2.6"/>
    </reaction>
</comment>
<comment type="catalytic activity">
    <reaction evidence="1">
        <text>L-phenylalanyl-tRNA(Phe) + an N-terminal L-alpha-aminoacyl-[protein] = an N-terminal L-phenylalanyl-L-alpha-aminoacyl-[protein] + tRNA(Phe)</text>
        <dbReference type="Rhea" id="RHEA:43632"/>
        <dbReference type="Rhea" id="RHEA-COMP:9668"/>
        <dbReference type="Rhea" id="RHEA-COMP:9699"/>
        <dbReference type="Rhea" id="RHEA-COMP:10636"/>
        <dbReference type="Rhea" id="RHEA-COMP:10637"/>
        <dbReference type="ChEBI" id="CHEBI:78442"/>
        <dbReference type="ChEBI" id="CHEBI:78531"/>
        <dbReference type="ChEBI" id="CHEBI:78597"/>
        <dbReference type="ChEBI" id="CHEBI:83561"/>
        <dbReference type="EC" id="2.3.2.6"/>
    </reaction>
</comment>
<comment type="subcellular location">
    <subcellularLocation>
        <location evidence="1">Cytoplasm</location>
    </subcellularLocation>
</comment>
<comment type="similarity">
    <text evidence="1">Belongs to the L/F-transferase family.</text>
</comment>
<reference key="1">
    <citation type="journal article" date="2009" name="Genome Res.">
        <title>Whole genome sequence of Desulfovibrio magneticus strain RS-1 revealed common gene clusters in magnetotactic bacteria.</title>
        <authorList>
            <person name="Nakazawa H."/>
            <person name="Arakaki A."/>
            <person name="Narita-Yamada S."/>
            <person name="Yashiro I."/>
            <person name="Jinno K."/>
            <person name="Aoki N."/>
            <person name="Tsuruyama A."/>
            <person name="Okamura Y."/>
            <person name="Tanikawa S."/>
            <person name="Fujita N."/>
            <person name="Takeyama H."/>
            <person name="Matsunaga T."/>
        </authorList>
    </citation>
    <scope>NUCLEOTIDE SEQUENCE [LARGE SCALE GENOMIC DNA]</scope>
    <source>
        <strain>ATCC 700980 / DSM 13731 / RS-1</strain>
    </source>
</reference>
<organism>
    <name type="scientific">Solidesulfovibrio magneticus (strain ATCC 700980 / DSM 13731 / RS-1)</name>
    <name type="common">Desulfovibrio magneticus</name>
    <dbReference type="NCBI Taxonomy" id="573370"/>
    <lineage>
        <taxon>Bacteria</taxon>
        <taxon>Pseudomonadati</taxon>
        <taxon>Thermodesulfobacteriota</taxon>
        <taxon>Desulfovibrionia</taxon>
        <taxon>Desulfovibrionales</taxon>
        <taxon>Desulfovibrionaceae</taxon>
        <taxon>Solidesulfovibrio</taxon>
    </lineage>
</organism>
<accession>C4XT58</accession>
<name>LFTR_SOLM1</name>
<sequence length="247" mass="27380">MPVFALIDEPVFPSPHLAEPGGLLAVGGDLSVARLLAAYRRGIFPWYDDESPILWWSPDPRPILVPGHVRVSKRLERTIRSGKFTVTLDTDFAGVIRGCAAVPRDADNGTWIVPDMIEGYERLHAAGHAHSVEAWQNGELVGGAYGVAIGKAFFGESMFHRATDASKVAFVTLCRFLDRHEFRFIDCQQATGHLLRFGAVQVRRNEFLRRLEAAREEEGMVGKWVLPRTTRCASPQPTSESSPSAKQ</sequence>
<keyword id="KW-0012">Acyltransferase</keyword>
<keyword id="KW-0963">Cytoplasm</keyword>
<keyword id="KW-0808">Transferase</keyword>
<protein>
    <recommendedName>
        <fullName evidence="1">Leucyl/phenylalanyl-tRNA--protein transferase</fullName>
        <ecNumber evidence="1">2.3.2.6</ecNumber>
    </recommendedName>
    <alternativeName>
        <fullName evidence="1">L/F-transferase</fullName>
    </alternativeName>
    <alternativeName>
        <fullName evidence="1">Leucyltransferase</fullName>
    </alternativeName>
    <alternativeName>
        <fullName evidence="1">Phenyalanyltransferase</fullName>
    </alternativeName>
</protein>
<proteinExistence type="inferred from homology"/>
<dbReference type="EC" id="2.3.2.6" evidence="1"/>
<dbReference type="EMBL" id="AP010904">
    <property type="protein sequence ID" value="BAH75862.1"/>
    <property type="molecule type" value="Genomic_DNA"/>
</dbReference>
<dbReference type="RefSeq" id="WP_015861043.1">
    <property type="nucleotide sequence ID" value="NC_012796.1"/>
</dbReference>
<dbReference type="SMR" id="C4XT58"/>
<dbReference type="STRING" id="573370.DMR_23710"/>
<dbReference type="KEGG" id="dma:DMR_23710"/>
<dbReference type="eggNOG" id="COG2360">
    <property type="taxonomic scope" value="Bacteria"/>
</dbReference>
<dbReference type="HOGENOM" id="CLU_075045_0_0_7"/>
<dbReference type="OrthoDB" id="9790282at2"/>
<dbReference type="Proteomes" id="UP000009071">
    <property type="component" value="Chromosome"/>
</dbReference>
<dbReference type="GO" id="GO:0005737">
    <property type="term" value="C:cytoplasm"/>
    <property type="evidence" value="ECO:0007669"/>
    <property type="project" value="UniProtKB-SubCell"/>
</dbReference>
<dbReference type="GO" id="GO:0008914">
    <property type="term" value="F:leucyl-tRNA--protein transferase activity"/>
    <property type="evidence" value="ECO:0007669"/>
    <property type="project" value="UniProtKB-UniRule"/>
</dbReference>
<dbReference type="GO" id="GO:0030163">
    <property type="term" value="P:protein catabolic process"/>
    <property type="evidence" value="ECO:0007669"/>
    <property type="project" value="UniProtKB-UniRule"/>
</dbReference>
<dbReference type="FunFam" id="3.30.70.3550:FF:000001">
    <property type="entry name" value="Leucyl/phenylalanyl-tRNA--protein transferase"/>
    <property type="match status" value="1"/>
</dbReference>
<dbReference type="FunFam" id="3.40.630.70:FF:000001">
    <property type="entry name" value="Leucyl/phenylalanyl-tRNA--protein transferase"/>
    <property type="match status" value="1"/>
</dbReference>
<dbReference type="Gene3D" id="3.40.630.70">
    <property type="entry name" value="Leucyl/phenylalanyl-tRNA-protein transferase, C-terminal domain"/>
    <property type="match status" value="1"/>
</dbReference>
<dbReference type="Gene3D" id="3.30.70.3550">
    <property type="entry name" value="Leucyl/phenylalanyl-tRNA-protein transferase, N-terminal domain"/>
    <property type="match status" value="1"/>
</dbReference>
<dbReference type="HAMAP" id="MF_00688">
    <property type="entry name" value="Leu_Phe_trans"/>
    <property type="match status" value="1"/>
</dbReference>
<dbReference type="InterPro" id="IPR016181">
    <property type="entry name" value="Acyl_CoA_acyltransferase"/>
</dbReference>
<dbReference type="InterPro" id="IPR004616">
    <property type="entry name" value="Leu/Phe-tRNA_Trfase"/>
</dbReference>
<dbReference type="InterPro" id="IPR042203">
    <property type="entry name" value="Leu/Phe-tRNA_Trfase_C"/>
</dbReference>
<dbReference type="InterPro" id="IPR042221">
    <property type="entry name" value="Leu/Phe-tRNA_Trfase_N"/>
</dbReference>
<dbReference type="NCBIfam" id="TIGR00667">
    <property type="entry name" value="aat"/>
    <property type="match status" value="1"/>
</dbReference>
<dbReference type="PANTHER" id="PTHR30098">
    <property type="entry name" value="LEUCYL/PHENYLALANYL-TRNA--PROTEIN TRANSFERASE"/>
    <property type="match status" value="1"/>
</dbReference>
<dbReference type="PANTHER" id="PTHR30098:SF2">
    <property type="entry name" value="LEUCYL_PHENYLALANYL-TRNA--PROTEIN TRANSFERASE"/>
    <property type="match status" value="1"/>
</dbReference>
<dbReference type="Pfam" id="PF03588">
    <property type="entry name" value="Leu_Phe_trans"/>
    <property type="match status" value="1"/>
</dbReference>
<dbReference type="SUPFAM" id="SSF55729">
    <property type="entry name" value="Acyl-CoA N-acyltransferases (Nat)"/>
    <property type="match status" value="1"/>
</dbReference>
<evidence type="ECO:0000255" key="1">
    <source>
        <dbReference type="HAMAP-Rule" id="MF_00688"/>
    </source>
</evidence>